<name>NU2M_GADMO</name>
<reference key="1">
    <citation type="journal article" date="1994" name="Biochim. Biophys. Acta">
        <title>Sequence analysis of 12 structural genes and a novel non-coding region from mitochondrial DNA of Atlantic cod, Gadus morhua.</title>
        <authorList>
            <person name="Johansen S."/>
            <person name="Johansen T."/>
        </authorList>
    </citation>
    <scope>NUCLEOTIDE SEQUENCE [GENOMIC DNA]</scope>
    <source>
        <strain>Norwegian coastal 1</strain>
    </source>
</reference>
<reference key="2">
    <citation type="journal article" date="1996" name="Mol. Mar. Biol. Biotechnol.">
        <title>The complete mitochondrial DNA sequence of Atlantic cod (Gadus morhua): relevance to taxonomic studies among codfishes.</title>
        <authorList>
            <person name="Johansen S."/>
            <person name="Bakke I."/>
        </authorList>
    </citation>
    <scope>NUCLEOTIDE SEQUENCE [GENOMIC DNA]</scope>
    <source>
        <strain>Norwegian coastal 1</strain>
    </source>
</reference>
<comment type="function">
    <text evidence="1">Core subunit of the mitochondrial membrane respiratory chain NADH dehydrogenase (Complex I) that is believed to belong to the minimal assembly required for catalysis. Complex I functions in the transfer of electrons from NADH to the respiratory chain. The immediate electron acceptor for the enzyme is believed to be ubiquinone (By similarity).</text>
</comment>
<comment type="catalytic activity">
    <reaction>
        <text>a ubiquinone + NADH + 5 H(+)(in) = a ubiquinol + NAD(+) + 4 H(+)(out)</text>
        <dbReference type="Rhea" id="RHEA:29091"/>
        <dbReference type="Rhea" id="RHEA-COMP:9565"/>
        <dbReference type="Rhea" id="RHEA-COMP:9566"/>
        <dbReference type="ChEBI" id="CHEBI:15378"/>
        <dbReference type="ChEBI" id="CHEBI:16389"/>
        <dbReference type="ChEBI" id="CHEBI:17976"/>
        <dbReference type="ChEBI" id="CHEBI:57540"/>
        <dbReference type="ChEBI" id="CHEBI:57945"/>
        <dbReference type="EC" id="7.1.1.2"/>
    </reaction>
</comment>
<comment type="subcellular location">
    <subcellularLocation>
        <location>Mitochondrion inner membrane</location>
        <topology>Multi-pass membrane protein</topology>
    </subcellularLocation>
</comment>
<comment type="similarity">
    <text evidence="3">Belongs to the complex I subunit 2 family.</text>
</comment>
<feature type="chain" id="PRO_0000117588" description="NADH-ubiquinone oxidoreductase chain 2">
    <location>
        <begin position="1"/>
        <end position="348"/>
    </location>
</feature>
<feature type="transmembrane region" description="Helical" evidence="2">
    <location>
        <begin position="3"/>
        <end position="23"/>
    </location>
</feature>
<feature type="transmembrane region" description="Helical" evidence="2">
    <location>
        <begin position="24"/>
        <end position="44"/>
    </location>
</feature>
<feature type="transmembrane region" description="Helical" evidence="2">
    <location>
        <begin position="60"/>
        <end position="80"/>
    </location>
</feature>
<feature type="transmembrane region" description="Helical" evidence="2">
    <location>
        <begin position="95"/>
        <end position="115"/>
    </location>
</feature>
<feature type="transmembrane region" description="Helical" evidence="2">
    <location>
        <begin position="136"/>
        <end position="156"/>
    </location>
</feature>
<feature type="transmembrane region" description="Helical" evidence="2">
    <location>
        <begin position="177"/>
        <end position="197"/>
    </location>
</feature>
<feature type="transmembrane region" description="Helical" evidence="2">
    <location>
        <begin position="198"/>
        <end position="218"/>
    </location>
</feature>
<feature type="transmembrane region" description="Helical" evidence="2">
    <location>
        <begin position="239"/>
        <end position="259"/>
    </location>
</feature>
<feature type="transmembrane region" description="Helical" evidence="2">
    <location>
        <begin position="273"/>
        <end position="293"/>
    </location>
</feature>
<feature type="transmembrane region" description="Helical" evidence="2">
    <location>
        <begin position="325"/>
        <end position="345"/>
    </location>
</feature>
<gene>
    <name type="primary">MT-ND2</name>
    <name type="synonym">MTND2</name>
    <name type="synonym">NADH2</name>
    <name type="synonym">ND2</name>
</gene>
<keyword id="KW-0249">Electron transport</keyword>
<keyword id="KW-0472">Membrane</keyword>
<keyword id="KW-0496">Mitochondrion</keyword>
<keyword id="KW-0999">Mitochondrion inner membrane</keyword>
<keyword id="KW-0520">NAD</keyword>
<keyword id="KW-1185">Reference proteome</keyword>
<keyword id="KW-0679">Respiratory chain</keyword>
<keyword id="KW-1278">Translocase</keyword>
<keyword id="KW-0812">Transmembrane</keyword>
<keyword id="KW-1133">Transmembrane helix</keyword>
<keyword id="KW-0813">Transport</keyword>
<keyword id="KW-0830">Ubiquinone</keyword>
<geneLocation type="mitochondrion"/>
<dbReference type="EC" id="7.1.1.2"/>
<dbReference type="EMBL" id="X76363">
    <property type="protein sequence ID" value="CAA53964.1"/>
    <property type="molecule type" value="Genomic_DNA"/>
</dbReference>
<dbReference type="EMBL" id="X99772">
    <property type="protein sequence ID" value="CAA68107.1"/>
    <property type="molecule type" value="Genomic_DNA"/>
</dbReference>
<dbReference type="PIR" id="S45350">
    <property type="entry name" value="S45350"/>
</dbReference>
<dbReference type="RefSeq" id="NP_008614.1">
    <property type="nucleotide sequence ID" value="NC_002081.1"/>
</dbReference>
<dbReference type="SMR" id="P55780"/>
<dbReference type="GeneID" id="808445"/>
<dbReference type="CTD" id="4536"/>
<dbReference type="OrthoDB" id="4092844at2759"/>
<dbReference type="Proteomes" id="UP000694546">
    <property type="component" value="Unplaced"/>
</dbReference>
<dbReference type="GO" id="GO:0005743">
    <property type="term" value="C:mitochondrial inner membrane"/>
    <property type="evidence" value="ECO:0007669"/>
    <property type="project" value="UniProtKB-SubCell"/>
</dbReference>
<dbReference type="GO" id="GO:0008137">
    <property type="term" value="F:NADH dehydrogenase (ubiquinone) activity"/>
    <property type="evidence" value="ECO:0007669"/>
    <property type="project" value="UniProtKB-EC"/>
</dbReference>
<dbReference type="GO" id="GO:0006120">
    <property type="term" value="P:mitochondrial electron transport, NADH to ubiquinone"/>
    <property type="evidence" value="ECO:0007669"/>
    <property type="project" value="InterPro"/>
</dbReference>
<dbReference type="InterPro" id="IPR050175">
    <property type="entry name" value="Complex_I_Subunit_2"/>
</dbReference>
<dbReference type="InterPro" id="IPR010933">
    <property type="entry name" value="NADH_DH_su2_C"/>
</dbReference>
<dbReference type="InterPro" id="IPR003917">
    <property type="entry name" value="NADH_UbQ_OxRdtase_chain2"/>
</dbReference>
<dbReference type="InterPro" id="IPR001750">
    <property type="entry name" value="ND/Mrp_TM"/>
</dbReference>
<dbReference type="PANTHER" id="PTHR46552">
    <property type="entry name" value="NADH-UBIQUINONE OXIDOREDUCTASE CHAIN 2"/>
    <property type="match status" value="1"/>
</dbReference>
<dbReference type="PANTHER" id="PTHR46552:SF1">
    <property type="entry name" value="NADH-UBIQUINONE OXIDOREDUCTASE CHAIN 2"/>
    <property type="match status" value="1"/>
</dbReference>
<dbReference type="Pfam" id="PF06444">
    <property type="entry name" value="NADH_dehy_S2_C"/>
    <property type="match status" value="1"/>
</dbReference>
<dbReference type="Pfam" id="PF00361">
    <property type="entry name" value="Proton_antipo_M"/>
    <property type="match status" value="1"/>
</dbReference>
<dbReference type="PRINTS" id="PR01436">
    <property type="entry name" value="NADHDHGNASE2"/>
</dbReference>
<evidence type="ECO:0000250" key="1"/>
<evidence type="ECO:0000255" key="2"/>
<evidence type="ECO:0000305" key="3"/>
<protein>
    <recommendedName>
        <fullName>NADH-ubiquinone oxidoreductase chain 2</fullName>
        <ecNumber>7.1.1.2</ecNumber>
    </recommendedName>
    <alternativeName>
        <fullName>NADH dehydrogenase subunit 2</fullName>
    </alternativeName>
</protein>
<sequence>MNPFILSILLLSLGLGTTLTFASSHWLLAWMGLEISTLAIIPLMSQHHHPRAVEATTKYFITQAAAAALILFASTTNAWITGQWDINFDLHFFPASMLTMALALKMGLAPVHFWLPEVLQGLDLTTGLILSTWQKLAPFILMCQIMPVNSSLITFLGVTSTLVGGWGGLNQTQLRKILAYSSIAHLGWMILVMQFNQQLALLALIIYIPMTFSTFMIFKTNSSTTVNTLAASWAKTPALTAITPMILLSLGGLPPLSGFMPKWMILQELTKQDIPLTASIAALSALLSLYFYLRVSYAMTLTISPNNLNATTPWRLQTTASTLPLAISATISAMLLPLAPATLALLSL</sequence>
<accession>P55780</accession>
<organism>
    <name type="scientific">Gadus morhua</name>
    <name type="common">Atlantic cod</name>
    <dbReference type="NCBI Taxonomy" id="8049"/>
    <lineage>
        <taxon>Eukaryota</taxon>
        <taxon>Metazoa</taxon>
        <taxon>Chordata</taxon>
        <taxon>Craniata</taxon>
        <taxon>Vertebrata</taxon>
        <taxon>Euteleostomi</taxon>
        <taxon>Actinopterygii</taxon>
        <taxon>Neopterygii</taxon>
        <taxon>Teleostei</taxon>
        <taxon>Neoteleostei</taxon>
        <taxon>Acanthomorphata</taxon>
        <taxon>Zeiogadaria</taxon>
        <taxon>Gadariae</taxon>
        <taxon>Gadiformes</taxon>
        <taxon>Gadoidei</taxon>
        <taxon>Gadidae</taxon>
        <taxon>Gadus</taxon>
    </lineage>
</organism>
<proteinExistence type="inferred from homology"/>